<keyword id="KW-0010">Activator</keyword>
<keyword id="KW-0156">Chromatin regulator</keyword>
<keyword id="KW-0539">Nucleus</keyword>
<keyword id="KW-1185">Reference proteome</keyword>
<keyword id="KW-0804">Transcription</keyword>
<keyword id="KW-0805">Transcription regulation</keyword>
<accession>Q7RYI3</accession>
<protein>
    <recommendedName>
        <fullName>SWR1-complex protein 5</fullName>
    </recommendedName>
    <alternativeName>
        <fullName>Chromatin-remodeling complex protein 2</fullName>
    </alternativeName>
</protein>
<gene>
    <name type="primary">crc-2</name>
    <name type="synonym">swc5</name>
    <name type="ORF">NCU06491</name>
</gene>
<comment type="function">
    <text evidence="1">Component of the SWR1 complex which mediates the ATP-dependent exchange of histone H2A for the H2A variant H2A.Z leading to transcriptional regulation of selected genes by chromatin remodeling. Involved in chromosome stability (By similarity).</text>
</comment>
<comment type="subunit">
    <text evidence="1">Component of the SWR1 chromatin remodeling complex.</text>
</comment>
<comment type="subcellular location">
    <subcellularLocation>
        <location evidence="1">Nucleus</location>
    </subcellularLocation>
</comment>
<comment type="similarity">
    <text evidence="4">Belongs to the SWC5 family.</text>
</comment>
<evidence type="ECO:0000250" key="1"/>
<evidence type="ECO:0000255" key="2">
    <source>
        <dbReference type="PROSITE-ProRule" id="PRU00610"/>
    </source>
</evidence>
<evidence type="ECO:0000256" key="3">
    <source>
        <dbReference type="SAM" id="MobiDB-lite"/>
    </source>
</evidence>
<evidence type="ECO:0000305" key="4"/>
<sequence length="342" mass="37162">MAPTLELLAEDYASEEDSDFAPETAEAAGESSISDDDDEEAGEDAEKAKPEKRKRAAIEEAEDAGYDNSGDEAIIKKGEKRQKKTKTKLAADDEETGEGGLIKTRSQRAVEKEKRSTAAASGPVTIDVDALWAQMISEPVIPRTSTAKPDESADPANCDIAKSSSQQPETAKAKDPDSDLIKIKRTYNFAGKVHTEEKLVARDSAEAKLYLASLGENAPADGETAAEDESSSAKRMPRKAFRSVFEPITDANSAHRSDLNLSMASRLQAREATGNKAKKLNTVEKSKMDWAVAVDKMGLKDELELAGKSKDSFAARQDFLARSEMRREEEARRARMAQAGKT</sequence>
<reference key="1">
    <citation type="journal article" date="2003" name="Nature">
        <title>The genome sequence of the filamentous fungus Neurospora crassa.</title>
        <authorList>
            <person name="Galagan J.E."/>
            <person name="Calvo S.E."/>
            <person name="Borkovich K.A."/>
            <person name="Selker E.U."/>
            <person name="Read N.D."/>
            <person name="Jaffe D.B."/>
            <person name="FitzHugh W."/>
            <person name="Ma L.-J."/>
            <person name="Smirnov S."/>
            <person name="Purcell S."/>
            <person name="Rehman B."/>
            <person name="Elkins T."/>
            <person name="Engels R."/>
            <person name="Wang S."/>
            <person name="Nielsen C.B."/>
            <person name="Butler J."/>
            <person name="Endrizzi M."/>
            <person name="Qui D."/>
            <person name="Ianakiev P."/>
            <person name="Bell-Pedersen D."/>
            <person name="Nelson M.A."/>
            <person name="Werner-Washburne M."/>
            <person name="Selitrennikoff C.P."/>
            <person name="Kinsey J.A."/>
            <person name="Braun E.L."/>
            <person name="Zelter A."/>
            <person name="Schulte U."/>
            <person name="Kothe G.O."/>
            <person name="Jedd G."/>
            <person name="Mewes H.-W."/>
            <person name="Staben C."/>
            <person name="Marcotte E."/>
            <person name="Greenberg D."/>
            <person name="Roy A."/>
            <person name="Foley K."/>
            <person name="Naylor J."/>
            <person name="Stange-Thomann N."/>
            <person name="Barrett R."/>
            <person name="Gnerre S."/>
            <person name="Kamal M."/>
            <person name="Kamvysselis M."/>
            <person name="Mauceli E.W."/>
            <person name="Bielke C."/>
            <person name="Rudd S."/>
            <person name="Frishman D."/>
            <person name="Krystofova S."/>
            <person name="Rasmussen C."/>
            <person name="Metzenberg R.L."/>
            <person name="Perkins D.D."/>
            <person name="Kroken S."/>
            <person name="Cogoni C."/>
            <person name="Macino G."/>
            <person name="Catcheside D.E.A."/>
            <person name="Li W."/>
            <person name="Pratt R.J."/>
            <person name="Osmani S.A."/>
            <person name="DeSouza C.P.C."/>
            <person name="Glass N.L."/>
            <person name="Orbach M.J."/>
            <person name="Berglund J.A."/>
            <person name="Voelker R."/>
            <person name="Yarden O."/>
            <person name="Plamann M."/>
            <person name="Seiler S."/>
            <person name="Dunlap J.C."/>
            <person name="Radford A."/>
            <person name="Aramayo R."/>
            <person name="Natvig D.O."/>
            <person name="Alex L.A."/>
            <person name="Mannhaupt G."/>
            <person name="Ebbole D.J."/>
            <person name="Freitag M."/>
            <person name="Paulsen I."/>
            <person name="Sachs M.S."/>
            <person name="Lander E.S."/>
            <person name="Nusbaum C."/>
            <person name="Birren B.W."/>
        </authorList>
    </citation>
    <scope>NUCLEOTIDE SEQUENCE [LARGE SCALE GENOMIC DNA]</scope>
    <source>
        <strain>ATCC 24698 / 74-OR23-1A / CBS 708.71 / DSM 1257 / FGSC 987</strain>
    </source>
</reference>
<proteinExistence type="inferred from homology"/>
<organism>
    <name type="scientific">Neurospora crassa (strain ATCC 24698 / 74-OR23-1A / CBS 708.71 / DSM 1257 / FGSC 987)</name>
    <dbReference type="NCBI Taxonomy" id="367110"/>
    <lineage>
        <taxon>Eukaryota</taxon>
        <taxon>Fungi</taxon>
        <taxon>Dikarya</taxon>
        <taxon>Ascomycota</taxon>
        <taxon>Pezizomycotina</taxon>
        <taxon>Sordariomycetes</taxon>
        <taxon>Sordariomycetidae</taxon>
        <taxon>Sordariales</taxon>
        <taxon>Sordariaceae</taxon>
        <taxon>Neurospora</taxon>
    </lineage>
</organism>
<feature type="chain" id="PRO_0000212509" description="SWR1-complex protein 5">
    <location>
        <begin position="1"/>
        <end position="342"/>
    </location>
</feature>
<feature type="domain" description="BCNT-C" evidence="2">
    <location>
        <begin position="260"/>
        <end position="341"/>
    </location>
</feature>
<feature type="region of interest" description="Disordered" evidence="3">
    <location>
        <begin position="1"/>
        <end position="126"/>
    </location>
</feature>
<feature type="region of interest" description="Disordered" evidence="3">
    <location>
        <begin position="142"/>
        <end position="178"/>
    </location>
</feature>
<feature type="region of interest" description="Disordered" evidence="3">
    <location>
        <begin position="214"/>
        <end position="238"/>
    </location>
</feature>
<feature type="compositionally biased region" description="Acidic residues" evidence="3">
    <location>
        <begin position="8"/>
        <end position="20"/>
    </location>
</feature>
<feature type="compositionally biased region" description="Acidic residues" evidence="3">
    <location>
        <begin position="33"/>
        <end position="43"/>
    </location>
</feature>
<feature type="compositionally biased region" description="Basic residues" evidence="3">
    <location>
        <begin position="78"/>
        <end position="87"/>
    </location>
</feature>
<name>SWC5_NEUCR</name>
<dbReference type="EMBL" id="CM002238">
    <property type="protein sequence ID" value="EAA27895.1"/>
    <property type="molecule type" value="Genomic_DNA"/>
</dbReference>
<dbReference type="RefSeq" id="XP_957131.1">
    <property type="nucleotide sequence ID" value="XM_952038.2"/>
</dbReference>
<dbReference type="SMR" id="Q7RYI3"/>
<dbReference type="FunCoup" id="Q7RYI3">
    <property type="interactions" value="425"/>
</dbReference>
<dbReference type="STRING" id="367110.Q7RYI3"/>
<dbReference type="PaxDb" id="5141-EFNCRP00000006206"/>
<dbReference type="EnsemblFungi" id="EAA27895">
    <property type="protein sequence ID" value="EAA27895"/>
    <property type="gene ID" value="NCU06491"/>
</dbReference>
<dbReference type="GeneID" id="3873269"/>
<dbReference type="KEGG" id="ncr:NCU06491"/>
<dbReference type="VEuPathDB" id="FungiDB:NCU06491"/>
<dbReference type="HOGENOM" id="CLU_062474_0_0_1"/>
<dbReference type="InParanoid" id="Q7RYI3"/>
<dbReference type="OMA" id="LDWAAYV"/>
<dbReference type="OrthoDB" id="445677at2759"/>
<dbReference type="Proteomes" id="UP000001805">
    <property type="component" value="Chromosome 3, Linkage Group III"/>
</dbReference>
<dbReference type="GO" id="GO:0000812">
    <property type="term" value="C:Swr1 complex"/>
    <property type="evidence" value="ECO:0000318"/>
    <property type="project" value="GO_Central"/>
</dbReference>
<dbReference type="GO" id="GO:0006338">
    <property type="term" value="P:chromatin remodeling"/>
    <property type="evidence" value="ECO:0000318"/>
    <property type="project" value="GO_Central"/>
</dbReference>
<dbReference type="InterPro" id="IPR011421">
    <property type="entry name" value="BCNT-C"/>
</dbReference>
<dbReference type="InterPro" id="IPR027124">
    <property type="entry name" value="Swc5/CFDP1/2"/>
</dbReference>
<dbReference type="PANTHER" id="PTHR48407">
    <property type="entry name" value="CRANIOFACIAL DEVELOPMENT PROTEIN 1"/>
    <property type="match status" value="1"/>
</dbReference>
<dbReference type="PANTHER" id="PTHR48407:SF1">
    <property type="entry name" value="CRANIOFACIAL DEVELOPMENT PROTEIN 1"/>
    <property type="match status" value="1"/>
</dbReference>
<dbReference type="Pfam" id="PF07572">
    <property type="entry name" value="BCNT"/>
    <property type="match status" value="1"/>
</dbReference>
<dbReference type="PROSITE" id="PS51279">
    <property type="entry name" value="BCNT_C"/>
    <property type="match status" value="1"/>
</dbReference>